<feature type="chain" id="PRO_0000294641" description="ATP-dependent RNA helicase DRS1">
    <location>
        <begin position="1"/>
        <end position="790"/>
    </location>
</feature>
<feature type="domain" description="Helicase ATP-binding" evidence="3">
    <location>
        <begin position="286"/>
        <end position="460"/>
    </location>
</feature>
<feature type="domain" description="Helicase C-terminal" evidence="4">
    <location>
        <begin position="490"/>
        <end position="634"/>
    </location>
</feature>
<feature type="region of interest" description="Disordered" evidence="5">
    <location>
        <begin position="19"/>
        <end position="234"/>
    </location>
</feature>
<feature type="region of interest" description="Disordered" evidence="5">
    <location>
        <begin position="748"/>
        <end position="790"/>
    </location>
</feature>
<feature type="coiled-coil region" evidence="2">
    <location>
        <begin position="631"/>
        <end position="677"/>
    </location>
</feature>
<feature type="short sequence motif" description="Q motif">
    <location>
        <begin position="255"/>
        <end position="283"/>
    </location>
</feature>
<feature type="short sequence motif" description="DEAD box">
    <location>
        <begin position="408"/>
        <end position="411"/>
    </location>
</feature>
<feature type="compositionally biased region" description="Acidic residues" evidence="5">
    <location>
        <begin position="21"/>
        <end position="34"/>
    </location>
</feature>
<feature type="compositionally biased region" description="Basic residues" evidence="5">
    <location>
        <begin position="40"/>
        <end position="56"/>
    </location>
</feature>
<feature type="compositionally biased region" description="Acidic residues" evidence="5">
    <location>
        <begin position="61"/>
        <end position="70"/>
    </location>
</feature>
<feature type="compositionally biased region" description="Acidic residues" evidence="5">
    <location>
        <begin position="79"/>
        <end position="90"/>
    </location>
</feature>
<feature type="compositionally biased region" description="Basic and acidic residues" evidence="5">
    <location>
        <begin position="137"/>
        <end position="153"/>
    </location>
</feature>
<feature type="compositionally biased region" description="Acidic residues" evidence="5">
    <location>
        <begin position="154"/>
        <end position="167"/>
    </location>
</feature>
<feature type="compositionally biased region" description="Acidic residues" evidence="5">
    <location>
        <begin position="196"/>
        <end position="209"/>
    </location>
</feature>
<feature type="compositionally biased region" description="Acidic residues" evidence="5">
    <location>
        <begin position="219"/>
        <end position="233"/>
    </location>
</feature>
<feature type="compositionally biased region" description="Basic residues" evidence="5">
    <location>
        <begin position="777"/>
        <end position="790"/>
    </location>
</feature>
<feature type="binding site" evidence="3">
    <location>
        <begin position="299"/>
        <end position="306"/>
    </location>
    <ligand>
        <name>ATP</name>
        <dbReference type="ChEBI" id="CHEBI:30616"/>
    </ligand>
</feature>
<keyword id="KW-0067">ATP-binding</keyword>
<keyword id="KW-0175">Coiled coil</keyword>
<keyword id="KW-0347">Helicase</keyword>
<keyword id="KW-0378">Hydrolase</keyword>
<keyword id="KW-0547">Nucleotide-binding</keyword>
<keyword id="KW-0539">Nucleus</keyword>
<keyword id="KW-1185">Reference proteome</keyword>
<keyword id="KW-0690">Ribosome biogenesis</keyword>
<keyword id="KW-0694">RNA-binding</keyword>
<comment type="function">
    <text evidence="1">ATP-binding RNA helicase involved in ribosome assembly.</text>
</comment>
<comment type="catalytic activity">
    <reaction>
        <text>ATP + H2O = ADP + phosphate + H(+)</text>
        <dbReference type="Rhea" id="RHEA:13065"/>
        <dbReference type="ChEBI" id="CHEBI:15377"/>
        <dbReference type="ChEBI" id="CHEBI:15378"/>
        <dbReference type="ChEBI" id="CHEBI:30616"/>
        <dbReference type="ChEBI" id="CHEBI:43474"/>
        <dbReference type="ChEBI" id="CHEBI:456216"/>
        <dbReference type="EC" id="3.6.4.13"/>
    </reaction>
</comment>
<comment type="subunit">
    <text evidence="1">Associates with pre-ribosomal particles.</text>
</comment>
<comment type="subcellular location">
    <subcellularLocation>
        <location evidence="1">Nucleus</location>
        <location evidence="1">Nucleolus</location>
    </subcellularLocation>
</comment>
<comment type="domain">
    <text>The Q motif is unique to and characteristic of the DEAD box family of RNA helicases and controls ATP binding and hydrolysis.</text>
</comment>
<comment type="similarity">
    <text evidence="6">Belongs to the DEAD box helicase family. DDX27/DRS1 subfamily.</text>
</comment>
<comment type="sequence caution" evidence="6">
    <conflict type="erroneous initiation">
        <sequence resource="EMBL-CDS" id="EHA53115"/>
    </conflict>
    <text>Extended N-terminus.</text>
</comment>
<reference key="1">
    <citation type="journal article" date="2005" name="Nature">
        <title>The genome sequence of the rice blast fungus Magnaporthe grisea.</title>
        <authorList>
            <person name="Dean R.A."/>
            <person name="Talbot N.J."/>
            <person name="Ebbole D.J."/>
            <person name="Farman M.L."/>
            <person name="Mitchell T.K."/>
            <person name="Orbach M.J."/>
            <person name="Thon M.R."/>
            <person name="Kulkarni R."/>
            <person name="Xu J.-R."/>
            <person name="Pan H."/>
            <person name="Read N.D."/>
            <person name="Lee Y.-H."/>
            <person name="Carbone I."/>
            <person name="Brown D."/>
            <person name="Oh Y.Y."/>
            <person name="Donofrio N."/>
            <person name="Jeong J.S."/>
            <person name="Soanes D.M."/>
            <person name="Djonovic S."/>
            <person name="Kolomiets E."/>
            <person name="Rehmeyer C."/>
            <person name="Li W."/>
            <person name="Harding M."/>
            <person name="Kim S."/>
            <person name="Lebrun M.-H."/>
            <person name="Bohnert H."/>
            <person name="Coughlan S."/>
            <person name="Butler J."/>
            <person name="Calvo S.E."/>
            <person name="Ma L.-J."/>
            <person name="Nicol R."/>
            <person name="Purcell S."/>
            <person name="Nusbaum C."/>
            <person name="Galagan J.E."/>
            <person name="Birren B.W."/>
        </authorList>
    </citation>
    <scope>NUCLEOTIDE SEQUENCE [LARGE SCALE GENOMIC DNA]</scope>
    <source>
        <strain>70-15 / ATCC MYA-4617 / FGSC 8958</strain>
    </source>
</reference>
<protein>
    <recommendedName>
        <fullName>ATP-dependent RNA helicase DRS1</fullName>
        <ecNumber>3.6.4.13</ecNumber>
    </recommendedName>
</protein>
<accession>A4QYM6</accession>
<accession>G4N080</accession>
<organism>
    <name type="scientific">Pyricularia oryzae (strain 70-15 / ATCC MYA-4617 / FGSC 8958)</name>
    <name type="common">Rice blast fungus</name>
    <name type="synonym">Magnaporthe oryzae</name>
    <dbReference type="NCBI Taxonomy" id="242507"/>
    <lineage>
        <taxon>Eukaryota</taxon>
        <taxon>Fungi</taxon>
        <taxon>Dikarya</taxon>
        <taxon>Ascomycota</taxon>
        <taxon>Pezizomycotina</taxon>
        <taxon>Sordariomycetes</taxon>
        <taxon>Sordariomycetidae</taxon>
        <taxon>Magnaporthales</taxon>
        <taxon>Pyriculariaceae</taxon>
        <taxon>Pyricularia</taxon>
    </lineage>
</organism>
<sequence length="790" mass="86592">MAPSSKRKAINDDFITTISDNEADEFVEEEEVIQEEAPPKKKSKTIPKKKQKRSSKKASNDDDAEDEEDGHIEGVWGQNDDDDGAMDSDFEFVTGAGVEDLDDNPEFEGWGFDGAKKAMGQGNGVDLDEIIRRRREKKEGGTKGAAEPEAKAEEEGEALGLDDDDDEVLARDAFGMGAGSDDEDSAEASEGQDGSEASEGEEGDSDDESVASPVPHPDDDQESESEQDEDEEEAAKMKEFFAADEPKSDTNKGNASFQSMSLSRPILRGLTSVGFAKPTPIQSKTIPIALMGKDVVGGAVTGSGKTAAFVVPILERLLYRPKKVPTSRVVILAPTRELAIQCHAVATKLASHTDIKFCLAVGGLSLKVQESELRLRPDVIIATPGRFIDHMRNSASFAVDTVEILVLDEADRMLEDGFADELNEILTTLPKSRQTMLFSATMTSSVDNLIRVGLNKPVRLMVDSQKKTVVTLTQEFVRLRPGREEKRMGYLVYLCKNLYTERVIIFFRQKKIAHHARIIFGLLGLSCAELHGSMSQIQRIQSVEAFRDGKVSFLLATDLASRGLDIKGVDTVINYEAPQSLEIYVHRVGRTARAGRSGTAITLAAEPDRKVVKAAVKAGKAQGAKISSRIIDAADADSWQAKIDELEDEVEAVMREEKEEKVLAQADMEMRKGENMIRYEDDIKARPKRTWFETEKDKKAAREAGRAALNGVREALKKKHGGKNLSNKDKKKLDAMAEAKEARVWKKGAAERAGKGAVLNFKKDKSSKKGPVVGGRVAKKGAPRGKPRRR</sequence>
<name>DRS1_PYRO7</name>
<dbReference type="EC" id="3.6.4.13"/>
<dbReference type="EMBL" id="CM001233">
    <property type="protein sequence ID" value="EHA53115.1"/>
    <property type="status" value="ALT_INIT"/>
    <property type="molecule type" value="Genomic_DNA"/>
</dbReference>
<dbReference type="RefSeq" id="XP_003712922.1">
    <property type="nucleotide sequence ID" value="XM_003712874.1"/>
</dbReference>
<dbReference type="SMR" id="A4QYM6"/>
<dbReference type="FunCoup" id="A4QYM6">
    <property type="interactions" value="858"/>
</dbReference>
<dbReference type="STRING" id="242507.A4QYM6"/>
<dbReference type="GeneID" id="2683645"/>
<dbReference type="KEGG" id="mgr:MGG_07718"/>
<dbReference type="eggNOG" id="KOG0338">
    <property type="taxonomic scope" value="Eukaryota"/>
</dbReference>
<dbReference type="InParanoid" id="A4QYM6"/>
<dbReference type="OrthoDB" id="10259843at2759"/>
<dbReference type="Proteomes" id="UP000009058">
    <property type="component" value="Chromosome 3"/>
</dbReference>
<dbReference type="GO" id="GO:0005829">
    <property type="term" value="C:cytosol"/>
    <property type="evidence" value="ECO:0007669"/>
    <property type="project" value="TreeGrafter"/>
</dbReference>
<dbReference type="GO" id="GO:0005730">
    <property type="term" value="C:nucleolus"/>
    <property type="evidence" value="ECO:0007669"/>
    <property type="project" value="UniProtKB-SubCell"/>
</dbReference>
<dbReference type="GO" id="GO:0005524">
    <property type="term" value="F:ATP binding"/>
    <property type="evidence" value="ECO:0007669"/>
    <property type="project" value="UniProtKB-KW"/>
</dbReference>
<dbReference type="GO" id="GO:0016887">
    <property type="term" value="F:ATP hydrolysis activity"/>
    <property type="evidence" value="ECO:0007669"/>
    <property type="project" value="RHEA"/>
</dbReference>
<dbReference type="GO" id="GO:0003723">
    <property type="term" value="F:RNA binding"/>
    <property type="evidence" value="ECO:0007669"/>
    <property type="project" value="UniProtKB-KW"/>
</dbReference>
<dbReference type="GO" id="GO:0003724">
    <property type="term" value="F:RNA helicase activity"/>
    <property type="evidence" value="ECO:0007669"/>
    <property type="project" value="UniProtKB-EC"/>
</dbReference>
<dbReference type="GO" id="GO:0010467">
    <property type="term" value="P:gene expression"/>
    <property type="evidence" value="ECO:0007669"/>
    <property type="project" value="UniProtKB-ARBA"/>
</dbReference>
<dbReference type="GO" id="GO:0042254">
    <property type="term" value="P:ribosome biogenesis"/>
    <property type="evidence" value="ECO:0007669"/>
    <property type="project" value="UniProtKB-KW"/>
</dbReference>
<dbReference type="CDD" id="cd17947">
    <property type="entry name" value="DEADc_DDX27"/>
    <property type="match status" value="1"/>
</dbReference>
<dbReference type="CDD" id="cd18787">
    <property type="entry name" value="SF2_C_DEAD"/>
    <property type="match status" value="1"/>
</dbReference>
<dbReference type="Gene3D" id="3.40.50.300">
    <property type="entry name" value="P-loop containing nucleotide triphosphate hydrolases"/>
    <property type="match status" value="2"/>
</dbReference>
<dbReference type="InterPro" id="IPR011545">
    <property type="entry name" value="DEAD/DEAH_box_helicase_dom"/>
</dbReference>
<dbReference type="InterPro" id="IPR050079">
    <property type="entry name" value="DEAD_box_RNA_helicase"/>
</dbReference>
<dbReference type="InterPro" id="IPR014001">
    <property type="entry name" value="Helicase_ATP-bd"/>
</dbReference>
<dbReference type="InterPro" id="IPR001650">
    <property type="entry name" value="Helicase_C-like"/>
</dbReference>
<dbReference type="InterPro" id="IPR027417">
    <property type="entry name" value="P-loop_NTPase"/>
</dbReference>
<dbReference type="InterPro" id="IPR000629">
    <property type="entry name" value="RNA-helicase_DEAD-box_CS"/>
</dbReference>
<dbReference type="InterPro" id="IPR014014">
    <property type="entry name" value="RNA_helicase_DEAD_Q_motif"/>
</dbReference>
<dbReference type="PANTHER" id="PTHR47959:SF1">
    <property type="entry name" value="ATP-DEPENDENT RNA HELICASE DBPA"/>
    <property type="match status" value="1"/>
</dbReference>
<dbReference type="PANTHER" id="PTHR47959">
    <property type="entry name" value="ATP-DEPENDENT RNA HELICASE RHLE-RELATED"/>
    <property type="match status" value="1"/>
</dbReference>
<dbReference type="Pfam" id="PF00270">
    <property type="entry name" value="DEAD"/>
    <property type="match status" value="1"/>
</dbReference>
<dbReference type="Pfam" id="PF00271">
    <property type="entry name" value="Helicase_C"/>
    <property type="match status" value="1"/>
</dbReference>
<dbReference type="SMART" id="SM00487">
    <property type="entry name" value="DEXDc"/>
    <property type="match status" value="1"/>
</dbReference>
<dbReference type="SMART" id="SM00490">
    <property type="entry name" value="HELICc"/>
    <property type="match status" value="1"/>
</dbReference>
<dbReference type="SUPFAM" id="SSF52540">
    <property type="entry name" value="P-loop containing nucleoside triphosphate hydrolases"/>
    <property type="match status" value="1"/>
</dbReference>
<dbReference type="PROSITE" id="PS00039">
    <property type="entry name" value="DEAD_ATP_HELICASE"/>
    <property type="match status" value="1"/>
</dbReference>
<dbReference type="PROSITE" id="PS51192">
    <property type="entry name" value="HELICASE_ATP_BIND_1"/>
    <property type="match status" value="1"/>
</dbReference>
<dbReference type="PROSITE" id="PS51194">
    <property type="entry name" value="HELICASE_CTER"/>
    <property type="match status" value="1"/>
</dbReference>
<dbReference type="PROSITE" id="PS51195">
    <property type="entry name" value="Q_MOTIF"/>
    <property type="match status" value="1"/>
</dbReference>
<gene>
    <name type="primary">DRS1</name>
    <name type="ORF">MGG_07718</name>
</gene>
<evidence type="ECO:0000250" key="1"/>
<evidence type="ECO:0000255" key="2"/>
<evidence type="ECO:0000255" key="3">
    <source>
        <dbReference type="PROSITE-ProRule" id="PRU00541"/>
    </source>
</evidence>
<evidence type="ECO:0000255" key="4">
    <source>
        <dbReference type="PROSITE-ProRule" id="PRU00542"/>
    </source>
</evidence>
<evidence type="ECO:0000256" key="5">
    <source>
        <dbReference type="SAM" id="MobiDB-lite"/>
    </source>
</evidence>
<evidence type="ECO:0000305" key="6"/>
<proteinExistence type="inferred from homology"/>